<accession>Q9YEV9</accession>
<organism>
    <name type="scientific">Aeropyrum pernix (strain ATCC 700893 / DSM 11879 / JCM 9820 / NBRC 100138 / K1)</name>
    <dbReference type="NCBI Taxonomy" id="272557"/>
    <lineage>
        <taxon>Archaea</taxon>
        <taxon>Thermoproteota</taxon>
        <taxon>Thermoprotei</taxon>
        <taxon>Desulfurococcales</taxon>
        <taxon>Desulfurococcaceae</taxon>
        <taxon>Aeropyrum</taxon>
    </lineage>
</organism>
<comment type="function">
    <text evidence="1">Possibly the antitoxin component of a type II toxin-antitoxin (TA) system.</text>
</comment>
<comment type="similarity">
    <text evidence="1">Belongs to the UPF0165 family.</text>
</comment>
<dbReference type="EMBL" id="BA000002">
    <property type="protein sequence ID" value="BAA79437.2"/>
    <property type="molecule type" value="Genomic_DNA"/>
</dbReference>
<dbReference type="PIR" id="A72743">
    <property type="entry name" value="A72743"/>
</dbReference>
<dbReference type="RefSeq" id="WP_010865776.1">
    <property type="nucleotide sequence ID" value="NC_000854.2"/>
</dbReference>
<dbReference type="SMR" id="Q9YEV9"/>
<dbReference type="STRING" id="272557.APE_0472b.1"/>
<dbReference type="EnsemblBacteria" id="BAA79437">
    <property type="protein sequence ID" value="BAA79437"/>
    <property type="gene ID" value="APE_0472b.1"/>
</dbReference>
<dbReference type="GeneID" id="1444655"/>
<dbReference type="KEGG" id="ape:APE_0472b.1"/>
<dbReference type="PATRIC" id="fig|272557.25.peg.361"/>
<dbReference type="eggNOG" id="arCOG10167">
    <property type="taxonomic scope" value="Archaea"/>
</dbReference>
<dbReference type="Proteomes" id="UP000002518">
    <property type="component" value="Chromosome"/>
</dbReference>
<dbReference type="InterPro" id="IPR008203">
    <property type="entry name" value="AF2212-like"/>
</dbReference>
<dbReference type="Pfam" id="PF01954">
    <property type="entry name" value="AF2212-like"/>
    <property type="match status" value="1"/>
</dbReference>
<dbReference type="SUPFAM" id="SSF141694">
    <property type="entry name" value="AF2212/PG0164-like"/>
    <property type="match status" value="1"/>
</dbReference>
<keyword id="KW-1185">Reference proteome</keyword>
<keyword id="KW-1277">Toxin-antitoxin system</keyword>
<reference key="1">
    <citation type="journal article" date="1999" name="DNA Res.">
        <title>Complete genome sequence of an aerobic hyper-thermophilic crenarchaeon, Aeropyrum pernix K1.</title>
        <authorList>
            <person name="Kawarabayasi Y."/>
            <person name="Hino Y."/>
            <person name="Horikawa H."/>
            <person name="Yamazaki S."/>
            <person name="Haikawa Y."/>
            <person name="Jin-no K."/>
            <person name="Takahashi M."/>
            <person name="Sekine M."/>
            <person name="Baba S."/>
            <person name="Ankai A."/>
            <person name="Kosugi H."/>
            <person name="Hosoyama A."/>
            <person name="Fukui S."/>
            <person name="Nagai Y."/>
            <person name="Nishijima K."/>
            <person name="Nakazawa H."/>
            <person name="Takamiya M."/>
            <person name="Masuda S."/>
            <person name="Funahashi T."/>
            <person name="Tanaka T."/>
            <person name="Kudoh Y."/>
            <person name="Yamazaki J."/>
            <person name="Kushida N."/>
            <person name="Oguchi A."/>
            <person name="Aoki K."/>
            <person name="Kubota K."/>
            <person name="Nakamura Y."/>
            <person name="Nomura N."/>
            <person name="Sako Y."/>
            <person name="Kikuchi H."/>
        </authorList>
    </citation>
    <scope>NUCLEOTIDE SEQUENCE [LARGE SCALE GENOMIC DNA]</scope>
    <source>
        <strain>ATCC 700893 / DSM 11879 / JCM 9820 / NBRC 100138 / K1</strain>
    </source>
</reference>
<gene>
    <name type="ordered locus">APE_0472b.1</name>
    <name type="ORF">APES021</name>
</gene>
<protein>
    <recommendedName>
        <fullName>Putative antitoxin APE_0472b.1</fullName>
    </recommendedName>
</protein>
<proteinExistence type="inferred from homology"/>
<feature type="chain" id="PRO_0000156845" description="Putative antitoxin APE_0472b.1">
    <location>
        <begin position="1"/>
        <end position="61"/>
    </location>
</feature>
<sequence>MSEIEGIVKSGVIIPLKPLTELEGKKIKIKIVDAESVDAEKLYSYLRLLREGEDARDFFKI</sequence>
<evidence type="ECO:0000305" key="1"/>
<name>Y021_AERPE</name>